<gene>
    <name evidence="1" type="primary">psmB2</name>
    <name type="ordered locus">Nmar_1728</name>
</gene>
<comment type="function">
    <text evidence="1">Component of the proteasome core, a large protease complex with broad specificity involved in protein degradation.</text>
</comment>
<comment type="catalytic activity">
    <reaction evidence="1">
        <text>Cleavage of peptide bonds with very broad specificity.</text>
        <dbReference type="EC" id="3.4.25.1"/>
    </reaction>
</comment>
<comment type="activity regulation">
    <text evidence="1">The formation of the proteasomal ATPase PAN-20S proteasome complex, via the docking of the C-termini of PAN into the intersubunit pockets in the alpha-rings, triggers opening of the gate for substrate entry. Interconversion between the open-gate and close-gate conformations leads to a dynamic regulation of the 20S proteasome proteolysis activity.</text>
</comment>
<comment type="subunit">
    <text evidence="1">The 20S proteasome core is composed of 14 alpha and 14 beta subunits that assemble into four stacked heptameric rings, resulting in a barrel-shaped structure. The two inner rings, each composed of seven catalytic beta subunits, are sandwiched by two outer rings, each composed of seven alpha subunits. The catalytic chamber with the active sites is on the inside of the barrel. Has a gated structure, the ends of the cylinder being occluded by the N-termini of the alpha-subunits. Is capped at one or both ends by the proteasome regulatory ATPase, PAN.</text>
</comment>
<comment type="subcellular location">
    <subcellularLocation>
        <location evidence="1">Cytoplasm</location>
    </subcellularLocation>
</comment>
<comment type="similarity">
    <text evidence="1">Belongs to the peptidase T1B family.</text>
</comment>
<feature type="propeptide" id="PRO_0000397386" description="Removed in mature form; by autocatalysis" evidence="1">
    <location>
        <begin position="1"/>
        <end position="12"/>
    </location>
</feature>
<feature type="chain" id="PRO_0000397387" description="Proteasome subunit beta 2">
    <location>
        <begin position="13"/>
        <end position="210"/>
    </location>
</feature>
<feature type="active site" description="Nucleophile" evidence="1">
    <location>
        <position position="13"/>
    </location>
</feature>
<proteinExistence type="inferred from homology"/>
<organism>
    <name type="scientific">Nitrosopumilus maritimus (strain SCM1)</name>
    <dbReference type="NCBI Taxonomy" id="436308"/>
    <lineage>
        <taxon>Archaea</taxon>
        <taxon>Nitrososphaerota</taxon>
        <taxon>Nitrososphaeria</taxon>
        <taxon>Nitrosopumilales</taxon>
        <taxon>Nitrosopumilaceae</taxon>
        <taxon>Nitrosopumilus</taxon>
    </lineage>
</organism>
<accession>A9A2U7</accession>
<dbReference type="EC" id="3.4.25.1" evidence="1"/>
<dbReference type="EMBL" id="CP000866">
    <property type="protein sequence ID" value="ABX13624.1"/>
    <property type="molecule type" value="Genomic_DNA"/>
</dbReference>
<dbReference type="RefSeq" id="WP_012216110.1">
    <property type="nucleotide sequence ID" value="NC_010085.1"/>
</dbReference>
<dbReference type="SMR" id="A9A2U7"/>
<dbReference type="FunCoup" id="A9A2U7">
    <property type="interactions" value="176"/>
</dbReference>
<dbReference type="STRING" id="436308.Nmar_1728"/>
<dbReference type="MEROPS" id="T01.002"/>
<dbReference type="EnsemblBacteria" id="ABX13624">
    <property type="protein sequence ID" value="ABX13624"/>
    <property type="gene ID" value="Nmar_1728"/>
</dbReference>
<dbReference type="GeneID" id="5774426"/>
<dbReference type="KEGG" id="nmr:Nmar_1728"/>
<dbReference type="eggNOG" id="arCOG00970">
    <property type="taxonomic scope" value="Archaea"/>
</dbReference>
<dbReference type="HOGENOM" id="CLU_035750_7_2_2"/>
<dbReference type="InParanoid" id="A9A2U7"/>
<dbReference type="OrthoDB" id="6330at2157"/>
<dbReference type="PhylomeDB" id="A9A2U7"/>
<dbReference type="Proteomes" id="UP000000792">
    <property type="component" value="Chromosome"/>
</dbReference>
<dbReference type="GO" id="GO:0005829">
    <property type="term" value="C:cytosol"/>
    <property type="evidence" value="ECO:0000318"/>
    <property type="project" value="GO_Central"/>
</dbReference>
<dbReference type="GO" id="GO:0019774">
    <property type="term" value="C:proteasome core complex, beta-subunit complex"/>
    <property type="evidence" value="ECO:0000318"/>
    <property type="project" value="GO_Central"/>
</dbReference>
<dbReference type="GO" id="GO:0004175">
    <property type="term" value="F:endopeptidase activity"/>
    <property type="evidence" value="ECO:0000318"/>
    <property type="project" value="GO_Central"/>
</dbReference>
<dbReference type="GO" id="GO:0004298">
    <property type="term" value="F:threonine-type endopeptidase activity"/>
    <property type="evidence" value="ECO:0007669"/>
    <property type="project" value="UniProtKB-UniRule"/>
</dbReference>
<dbReference type="GO" id="GO:0043161">
    <property type="term" value="P:proteasome-mediated ubiquitin-dependent protein catabolic process"/>
    <property type="evidence" value="ECO:0000318"/>
    <property type="project" value="GO_Central"/>
</dbReference>
<dbReference type="FunFam" id="3.60.20.10:FF:000049">
    <property type="entry name" value="Proteasome subunit beta"/>
    <property type="match status" value="1"/>
</dbReference>
<dbReference type="Gene3D" id="3.60.20.10">
    <property type="entry name" value="Glutamine Phosphoribosylpyrophosphate, subunit 1, domain 1"/>
    <property type="match status" value="1"/>
</dbReference>
<dbReference type="HAMAP" id="MF_02113_A">
    <property type="entry name" value="Proteasome_B_A"/>
    <property type="match status" value="1"/>
</dbReference>
<dbReference type="InterPro" id="IPR029055">
    <property type="entry name" value="Ntn_hydrolases_N"/>
</dbReference>
<dbReference type="InterPro" id="IPR019983">
    <property type="entry name" value="Pept_T1A_Psome_bsu_arc"/>
</dbReference>
<dbReference type="InterPro" id="IPR000243">
    <property type="entry name" value="Pept_T1A_subB"/>
</dbReference>
<dbReference type="InterPro" id="IPR016050">
    <property type="entry name" value="Proteasome_bsu_CS"/>
</dbReference>
<dbReference type="InterPro" id="IPR001353">
    <property type="entry name" value="Proteasome_sua/b"/>
</dbReference>
<dbReference type="InterPro" id="IPR023333">
    <property type="entry name" value="Proteasome_suB-type"/>
</dbReference>
<dbReference type="NCBIfam" id="TIGR03634">
    <property type="entry name" value="arc_protsome_B"/>
    <property type="match status" value="1"/>
</dbReference>
<dbReference type="PANTHER" id="PTHR32194:SF0">
    <property type="entry name" value="ATP-DEPENDENT PROTEASE SUBUNIT HSLV"/>
    <property type="match status" value="1"/>
</dbReference>
<dbReference type="PANTHER" id="PTHR32194">
    <property type="entry name" value="METALLOPROTEASE TLDD"/>
    <property type="match status" value="1"/>
</dbReference>
<dbReference type="Pfam" id="PF00227">
    <property type="entry name" value="Proteasome"/>
    <property type="match status" value="1"/>
</dbReference>
<dbReference type="PRINTS" id="PR00141">
    <property type="entry name" value="PROTEASOME"/>
</dbReference>
<dbReference type="SUPFAM" id="SSF56235">
    <property type="entry name" value="N-terminal nucleophile aminohydrolases (Ntn hydrolases)"/>
    <property type="match status" value="1"/>
</dbReference>
<dbReference type="PROSITE" id="PS00854">
    <property type="entry name" value="PROTEASOME_BETA_1"/>
    <property type="match status" value="1"/>
</dbReference>
<dbReference type="PROSITE" id="PS51476">
    <property type="entry name" value="PROTEASOME_BETA_2"/>
    <property type="match status" value="1"/>
</dbReference>
<sequence>MSNNVEEKILHGTTTVGIKAKDGVVLCADMRASAGYFIANNNTMKIQKIDDHAGLTLAGGVADAQNIVDILRYHSNLHRVEKHGPISIHSLARLCSLIFHQNRGYPFMADILVGGYDAEGPALFNIDMFGSVEKKAYVTTGSGSPVAYGLLEEEYREDLTVEEAKKIALRAVKAAIVRNIGTGDGINIAIMDKDGFRLLTEEQKKAVIEL</sequence>
<reference key="1">
    <citation type="journal article" date="2010" name="Proc. Natl. Acad. Sci. U.S.A.">
        <title>Nitrosopumilus maritimus genome reveals unique mechanisms for nitrification and autotrophy in globally distributed marine crenarchaea.</title>
        <authorList>
            <person name="Walker C.B."/>
            <person name="de la Torre J.R."/>
            <person name="Klotz M.G."/>
            <person name="Urakawa H."/>
            <person name="Pinel N."/>
            <person name="Arp D.J."/>
            <person name="Brochier-Armanet C."/>
            <person name="Chain P.S."/>
            <person name="Chan P.P."/>
            <person name="Gollabgir A."/>
            <person name="Hemp J."/>
            <person name="Hugler M."/>
            <person name="Karr E.A."/>
            <person name="Konneke M."/>
            <person name="Shin M."/>
            <person name="Lawton T.J."/>
            <person name="Lowe T."/>
            <person name="Martens-Habbena W."/>
            <person name="Sayavedra-Soto L.A."/>
            <person name="Lang D."/>
            <person name="Sievert S.M."/>
            <person name="Rosenzweig A.C."/>
            <person name="Manning G."/>
            <person name="Stahl D.A."/>
        </authorList>
    </citation>
    <scope>NUCLEOTIDE SEQUENCE [LARGE SCALE GENOMIC DNA]</scope>
    <source>
        <strain>SCM1</strain>
    </source>
</reference>
<keyword id="KW-0068">Autocatalytic cleavage</keyword>
<keyword id="KW-0963">Cytoplasm</keyword>
<keyword id="KW-0378">Hydrolase</keyword>
<keyword id="KW-0645">Protease</keyword>
<keyword id="KW-0647">Proteasome</keyword>
<keyword id="KW-1185">Reference proteome</keyword>
<keyword id="KW-0888">Threonine protease</keyword>
<keyword id="KW-0865">Zymogen</keyword>
<evidence type="ECO:0000255" key="1">
    <source>
        <dbReference type="HAMAP-Rule" id="MF_02113"/>
    </source>
</evidence>
<protein>
    <recommendedName>
        <fullName evidence="1">Proteasome subunit beta 2</fullName>
        <ecNumber evidence="1">3.4.25.1</ecNumber>
    </recommendedName>
    <alternativeName>
        <fullName evidence="1">20S proteasome beta subunit 2</fullName>
    </alternativeName>
    <alternativeName>
        <fullName evidence="1">Proteasome core protein PsmB 2</fullName>
    </alternativeName>
</protein>
<name>PSB2_NITMS</name>